<feature type="chain" id="PRO_1000075567" description="DNA mismatch repair protein MutS">
    <location>
        <begin position="1"/>
        <end position="847"/>
    </location>
</feature>
<feature type="region of interest" description="Disordered" evidence="2">
    <location>
        <begin position="788"/>
        <end position="807"/>
    </location>
</feature>
<feature type="compositionally biased region" description="Polar residues" evidence="2">
    <location>
        <begin position="796"/>
        <end position="807"/>
    </location>
</feature>
<feature type="binding site" evidence="1">
    <location>
        <begin position="602"/>
        <end position="609"/>
    </location>
    <ligand>
        <name>ATP</name>
        <dbReference type="ChEBI" id="CHEBI:30616"/>
    </ligand>
</feature>
<evidence type="ECO:0000255" key="1">
    <source>
        <dbReference type="HAMAP-Rule" id="MF_00096"/>
    </source>
</evidence>
<evidence type="ECO:0000256" key="2">
    <source>
        <dbReference type="SAM" id="MobiDB-lite"/>
    </source>
</evidence>
<proteinExistence type="inferred from homology"/>
<name>MUTS_STRGC</name>
<keyword id="KW-0067">ATP-binding</keyword>
<keyword id="KW-0227">DNA damage</keyword>
<keyword id="KW-0234">DNA repair</keyword>
<keyword id="KW-0238">DNA-binding</keyword>
<keyword id="KW-0547">Nucleotide-binding</keyword>
<keyword id="KW-1185">Reference proteome</keyword>
<comment type="function">
    <text evidence="1">This protein is involved in the repair of mismatches in DNA. It is possible that it carries out the mismatch recognition step. This protein has a weak ATPase activity.</text>
</comment>
<comment type="similarity">
    <text evidence="1">Belongs to the DNA mismatch repair MutS family.</text>
</comment>
<reference key="1">
    <citation type="journal article" date="2007" name="J. Bacteriol.">
        <title>Genome-wide transcriptional changes in Streptococcus gordonii in response to competence signaling peptide.</title>
        <authorList>
            <person name="Vickerman M.M."/>
            <person name="Iobst S."/>
            <person name="Jesionowski A.M."/>
            <person name="Gill S.R."/>
        </authorList>
    </citation>
    <scope>NUCLEOTIDE SEQUENCE [LARGE SCALE GENOMIC DNA]</scope>
    <source>
        <strain>Challis / ATCC 35105 / BCRC 15272 / CH1 / DL1 / V288</strain>
    </source>
</reference>
<gene>
    <name evidence="1" type="primary">mutS</name>
    <name type="ordered locus">SGO_2056</name>
</gene>
<protein>
    <recommendedName>
        <fullName evidence="1">DNA mismatch repair protein MutS</fullName>
    </recommendedName>
</protein>
<dbReference type="EMBL" id="CP000725">
    <property type="protein sequence ID" value="ABV10378.1"/>
    <property type="molecule type" value="Genomic_DNA"/>
</dbReference>
<dbReference type="RefSeq" id="WP_012131025.1">
    <property type="nucleotide sequence ID" value="NC_009785.1"/>
</dbReference>
<dbReference type="SMR" id="A8AZU4"/>
<dbReference type="STRING" id="467705.SGO_2056"/>
<dbReference type="KEGG" id="sgo:SGO_2056"/>
<dbReference type="eggNOG" id="COG0249">
    <property type="taxonomic scope" value="Bacteria"/>
</dbReference>
<dbReference type="HOGENOM" id="CLU_002472_4_0_9"/>
<dbReference type="Proteomes" id="UP000001131">
    <property type="component" value="Chromosome"/>
</dbReference>
<dbReference type="GO" id="GO:0005829">
    <property type="term" value="C:cytosol"/>
    <property type="evidence" value="ECO:0007669"/>
    <property type="project" value="TreeGrafter"/>
</dbReference>
<dbReference type="GO" id="GO:0005524">
    <property type="term" value="F:ATP binding"/>
    <property type="evidence" value="ECO:0007669"/>
    <property type="project" value="UniProtKB-UniRule"/>
</dbReference>
<dbReference type="GO" id="GO:0140664">
    <property type="term" value="F:ATP-dependent DNA damage sensor activity"/>
    <property type="evidence" value="ECO:0007669"/>
    <property type="project" value="InterPro"/>
</dbReference>
<dbReference type="GO" id="GO:0003684">
    <property type="term" value="F:damaged DNA binding"/>
    <property type="evidence" value="ECO:0007669"/>
    <property type="project" value="UniProtKB-UniRule"/>
</dbReference>
<dbReference type="GO" id="GO:0030983">
    <property type="term" value="F:mismatched DNA binding"/>
    <property type="evidence" value="ECO:0007669"/>
    <property type="project" value="InterPro"/>
</dbReference>
<dbReference type="GO" id="GO:0006298">
    <property type="term" value="P:mismatch repair"/>
    <property type="evidence" value="ECO:0007669"/>
    <property type="project" value="UniProtKB-UniRule"/>
</dbReference>
<dbReference type="CDD" id="cd03284">
    <property type="entry name" value="ABC_MutS1"/>
    <property type="match status" value="1"/>
</dbReference>
<dbReference type="FunFam" id="1.10.1420.10:FF:000001">
    <property type="entry name" value="DNA mismatch repair protein MutS"/>
    <property type="match status" value="1"/>
</dbReference>
<dbReference type="FunFam" id="3.40.1170.10:FF:000001">
    <property type="entry name" value="DNA mismatch repair protein MutS"/>
    <property type="match status" value="1"/>
</dbReference>
<dbReference type="FunFam" id="3.40.50.300:FF:000896">
    <property type="entry name" value="DNA mismatch repair protein MutS"/>
    <property type="match status" value="1"/>
</dbReference>
<dbReference type="Gene3D" id="1.10.1420.10">
    <property type="match status" value="2"/>
</dbReference>
<dbReference type="Gene3D" id="3.40.1170.10">
    <property type="entry name" value="DNA repair protein MutS, domain I"/>
    <property type="match status" value="1"/>
</dbReference>
<dbReference type="Gene3D" id="3.30.420.110">
    <property type="entry name" value="MutS, connector domain"/>
    <property type="match status" value="1"/>
</dbReference>
<dbReference type="Gene3D" id="3.40.50.300">
    <property type="entry name" value="P-loop containing nucleotide triphosphate hydrolases"/>
    <property type="match status" value="1"/>
</dbReference>
<dbReference type="HAMAP" id="MF_00096">
    <property type="entry name" value="MutS"/>
    <property type="match status" value="1"/>
</dbReference>
<dbReference type="InterPro" id="IPR005748">
    <property type="entry name" value="DNA_mismatch_repair_MutS"/>
</dbReference>
<dbReference type="InterPro" id="IPR007695">
    <property type="entry name" value="DNA_mismatch_repair_MutS-lik_N"/>
</dbReference>
<dbReference type="InterPro" id="IPR017261">
    <property type="entry name" value="DNA_mismatch_repair_MutS/MSH"/>
</dbReference>
<dbReference type="InterPro" id="IPR000432">
    <property type="entry name" value="DNA_mismatch_repair_MutS_C"/>
</dbReference>
<dbReference type="InterPro" id="IPR007861">
    <property type="entry name" value="DNA_mismatch_repair_MutS_clamp"/>
</dbReference>
<dbReference type="InterPro" id="IPR007696">
    <property type="entry name" value="DNA_mismatch_repair_MutS_core"/>
</dbReference>
<dbReference type="InterPro" id="IPR016151">
    <property type="entry name" value="DNA_mismatch_repair_MutS_N"/>
</dbReference>
<dbReference type="InterPro" id="IPR036187">
    <property type="entry name" value="DNA_mismatch_repair_MutS_sf"/>
</dbReference>
<dbReference type="InterPro" id="IPR007860">
    <property type="entry name" value="DNA_mmatch_repair_MutS_con_dom"/>
</dbReference>
<dbReference type="InterPro" id="IPR045076">
    <property type="entry name" value="MutS"/>
</dbReference>
<dbReference type="InterPro" id="IPR036678">
    <property type="entry name" value="MutS_con_dom_sf"/>
</dbReference>
<dbReference type="InterPro" id="IPR027417">
    <property type="entry name" value="P-loop_NTPase"/>
</dbReference>
<dbReference type="NCBIfam" id="TIGR01070">
    <property type="entry name" value="mutS1"/>
    <property type="match status" value="1"/>
</dbReference>
<dbReference type="NCBIfam" id="NF003810">
    <property type="entry name" value="PRK05399.1"/>
    <property type="match status" value="1"/>
</dbReference>
<dbReference type="PANTHER" id="PTHR11361:SF34">
    <property type="entry name" value="DNA MISMATCH REPAIR PROTEIN MSH1, MITOCHONDRIAL"/>
    <property type="match status" value="1"/>
</dbReference>
<dbReference type="PANTHER" id="PTHR11361">
    <property type="entry name" value="DNA MISMATCH REPAIR PROTEIN MUTS FAMILY MEMBER"/>
    <property type="match status" value="1"/>
</dbReference>
<dbReference type="Pfam" id="PF01624">
    <property type="entry name" value="MutS_I"/>
    <property type="match status" value="1"/>
</dbReference>
<dbReference type="Pfam" id="PF05188">
    <property type="entry name" value="MutS_II"/>
    <property type="match status" value="1"/>
</dbReference>
<dbReference type="Pfam" id="PF05192">
    <property type="entry name" value="MutS_III"/>
    <property type="match status" value="1"/>
</dbReference>
<dbReference type="Pfam" id="PF05190">
    <property type="entry name" value="MutS_IV"/>
    <property type="match status" value="1"/>
</dbReference>
<dbReference type="Pfam" id="PF00488">
    <property type="entry name" value="MutS_V"/>
    <property type="match status" value="1"/>
</dbReference>
<dbReference type="PIRSF" id="PIRSF037677">
    <property type="entry name" value="DNA_mis_repair_Msh6"/>
    <property type="match status" value="1"/>
</dbReference>
<dbReference type="SMART" id="SM00534">
    <property type="entry name" value="MUTSac"/>
    <property type="match status" value="1"/>
</dbReference>
<dbReference type="SMART" id="SM00533">
    <property type="entry name" value="MUTSd"/>
    <property type="match status" value="1"/>
</dbReference>
<dbReference type="SUPFAM" id="SSF55271">
    <property type="entry name" value="DNA repair protein MutS, domain I"/>
    <property type="match status" value="1"/>
</dbReference>
<dbReference type="SUPFAM" id="SSF53150">
    <property type="entry name" value="DNA repair protein MutS, domain II"/>
    <property type="match status" value="1"/>
</dbReference>
<dbReference type="SUPFAM" id="SSF48334">
    <property type="entry name" value="DNA repair protein MutS, domain III"/>
    <property type="match status" value="1"/>
</dbReference>
<dbReference type="SUPFAM" id="SSF52540">
    <property type="entry name" value="P-loop containing nucleoside triphosphate hydrolases"/>
    <property type="match status" value="1"/>
</dbReference>
<dbReference type="PROSITE" id="PS00486">
    <property type="entry name" value="DNA_MISMATCH_REPAIR_2"/>
    <property type="match status" value="1"/>
</dbReference>
<accession>A8AZU4</accession>
<organism>
    <name type="scientific">Streptococcus gordonii (strain Challis / ATCC 35105 / BCRC 15272 / CH1 / DL1 / V288)</name>
    <dbReference type="NCBI Taxonomy" id="467705"/>
    <lineage>
        <taxon>Bacteria</taxon>
        <taxon>Bacillati</taxon>
        <taxon>Bacillota</taxon>
        <taxon>Bacilli</taxon>
        <taxon>Lactobacillales</taxon>
        <taxon>Streptococcaceae</taxon>
        <taxon>Streptococcus</taxon>
    </lineage>
</organism>
<sequence length="847" mass="95246">MATEKISPGMQQYLDIKKDYQDAFLLFRMGDFYELFYEDAVNAAQILEIALTSRNKNSENPIPMAGVPYHSAQQYIDVLIESGYKVAIAEQMEDPKQAVGVVKREVVQVITPGTVVDSSKPVGENNFLVALDRQEQAYGLAYMDLATGEFQVTSLADFDQACGEIRNLRAREVVVGYCLSEDEQQILSKQMNLLLSEVEEAMEDVQLLGDELSSLEKQTAGKLLAYVFQTQMRELSHLKKVHHYEIKDFLQMDYATKTSLDLTENARTGKKHGSLFWLMDETKTAMGGRLLRSWIQHPLIDKGRIIKRQDVVQVFLDYFFERSDLADSLKGVYDIERLVSRVSFGKTNPKDLLQLASTLSHVPQIRSILETIESPALESLVARLDAIPELENLISSAIDPDAPQVITEGNIIRTGFDETLDQYRLVMREGTSWIADIEAKEREASGITNLKIDYNKKDGYYFHVTNSQLGNVPSHFFRKATLKNSERFGTEELARIEGEMLEAREKSANLEYEIFMRIREEVGKYIQRLQALAQTLATVDVLQSFAVVAESQHLVRPSFTSSRSLQIKKGRHAVVEKVMGAQSYIPNSIELDQETDIQLITGPNMSGKSTYMRQLAMIVIMAQMGSYVPAEVASLPIFDAIFTRIGAADDLVSGQSTFMVEMMEANRAIRQASERSLILFDELGRGTATYDGMALAQAIIEYIHDRTKAKTLFATHYHELTDLSSSLTRLENVHVATLEKDGQVTFLHKIEAGPADKSYGIHVAKIAGLPTDLLRRADAILTDLENQEKREASLPASRTDSQKVSEQMSLFVEETENPVLTELRDLDIYNMTPLEVMAAVAELKKKL</sequence>